<organism>
    <name type="scientific">Teredinibacter turnerae (strain ATCC 39867 / T7901)</name>
    <dbReference type="NCBI Taxonomy" id="377629"/>
    <lineage>
        <taxon>Bacteria</taxon>
        <taxon>Pseudomonadati</taxon>
        <taxon>Pseudomonadota</taxon>
        <taxon>Gammaproteobacteria</taxon>
        <taxon>Cellvibrionales</taxon>
        <taxon>Cellvibrionaceae</taxon>
        <taxon>Teredinibacter</taxon>
    </lineage>
</organism>
<comment type="function">
    <text evidence="1">Associates with the EF-Tu.GDP complex and induces the exchange of GDP to GTP. It remains bound to the aminoacyl-tRNA.EF-Tu.GTP complex up to the GTP hydrolysis stage on the ribosome.</text>
</comment>
<comment type="subcellular location">
    <subcellularLocation>
        <location evidence="1">Cytoplasm</location>
    </subcellularLocation>
</comment>
<comment type="similarity">
    <text evidence="1">Belongs to the EF-Ts family.</text>
</comment>
<proteinExistence type="inferred from homology"/>
<sequence>MAVSASLVKELRERTGLGMMECKKALAETDGDIDAAIENLRKASGLKAAKKADRTAAEGVVAAKVADDGSYGVLVEVNSETDFVARDAGFLAFVDSVVEKAFSAKAADVAAVNDEAMESTRQALVQKIGENIGIRRVSLIEADGGLVGAYVHSNNRIAVMVQLANGGSVELAKDVAMHIAAVNPQVVNPEDMPEEVVNKEKDIIKAQPDMEGKPEQIVEKMMTGRINKFLKENSLVEQPFVKDPEITVGALVKKEGASVVSFSRFEVGEGIEKKEEDFAAEVAAQVAASKGNA</sequence>
<gene>
    <name evidence="1" type="primary">tsf</name>
    <name type="ordered locus">TERTU_1006</name>
</gene>
<protein>
    <recommendedName>
        <fullName evidence="1">Elongation factor Ts</fullName>
        <shortName evidence="1">EF-Ts</shortName>
    </recommendedName>
</protein>
<name>EFTS_TERTT</name>
<accession>C5BQF7</accession>
<evidence type="ECO:0000255" key="1">
    <source>
        <dbReference type="HAMAP-Rule" id="MF_00050"/>
    </source>
</evidence>
<dbReference type="EMBL" id="CP001614">
    <property type="protein sequence ID" value="ACR13743.1"/>
    <property type="molecule type" value="Genomic_DNA"/>
</dbReference>
<dbReference type="RefSeq" id="WP_015819858.1">
    <property type="nucleotide sequence ID" value="NC_012997.1"/>
</dbReference>
<dbReference type="SMR" id="C5BQF7"/>
<dbReference type="STRING" id="377629.TERTU_1006"/>
<dbReference type="KEGG" id="ttu:TERTU_1006"/>
<dbReference type="eggNOG" id="COG0264">
    <property type="taxonomic scope" value="Bacteria"/>
</dbReference>
<dbReference type="HOGENOM" id="CLU_047155_0_2_6"/>
<dbReference type="OrthoDB" id="9808348at2"/>
<dbReference type="Proteomes" id="UP000009080">
    <property type="component" value="Chromosome"/>
</dbReference>
<dbReference type="GO" id="GO:0005737">
    <property type="term" value="C:cytoplasm"/>
    <property type="evidence" value="ECO:0007669"/>
    <property type="project" value="UniProtKB-SubCell"/>
</dbReference>
<dbReference type="GO" id="GO:0003746">
    <property type="term" value="F:translation elongation factor activity"/>
    <property type="evidence" value="ECO:0007669"/>
    <property type="project" value="UniProtKB-UniRule"/>
</dbReference>
<dbReference type="CDD" id="cd14275">
    <property type="entry name" value="UBA_EF-Ts"/>
    <property type="match status" value="1"/>
</dbReference>
<dbReference type="FunFam" id="1.10.286.20:FF:000001">
    <property type="entry name" value="Elongation factor Ts"/>
    <property type="match status" value="1"/>
</dbReference>
<dbReference type="FunFam" id="1.10.8.10:FF:000001">
    <property type="entry name" value="Elongation factor Ts"/>
    <property type="match status" value="1"/>
</dbReference>
<dbReference type="Gene3D" id="1.10.286.20">
    <property type="match status" value="1"/>
</dbReference>
<dbReference type="Gene3D" id="1.10.8.10">
    <property type="entry name" value="DNA helicase RuvA subunit, C-terminal domain"/>
    <property type="match status" value="1"/>
</dbReference>
<dbReference type="Gene3D" id="3.30.479.20">
    <property type="entry name" value="Elongation factor Ts, dimerisation domain"/>
    <property type="match status" value="2"/>
</dbReference>
<dbReference type="HAMAP" id="MF_00050">
    <property type="entry name" value="EF_Ts"/>
    <property type="match status" value="1"/>
</dbReference>
<dbReference type="InterPro" id="IPR036402">
    <property type="entry name" value="EF-Ts_dimer_sf"/>
</dbReference>
<dbReference type="InterPro" id="IPR001816">
    <property type="entry name" value="Transl_elong_EFTs/EF1B"/>
</dbReference>
<dbReference type="InterPro" id="IPR014039">
    <property type="entry name" value="Transl_elong_EFTs/EF1B_dimer"/>
</dbReference>
<dbReference type="InterPro" id="IPR018101">
    <property type="entry name" value="Transl_elong_Ts_CS"/>
</dbReference>
<dbReference type="InterPro" id="IPR009060">
    <property type="entry name" value="UBA-like_sf"/>
</dbReference>
<dbReference type="NCBIfam" id="TIGR00116">
    <property type="entry name" value="tsf"/>
    <property type="match status" value="1"/>
</dbReference>
<dbReference type="PANTHER" id="PTHR11741">
    <property type="entry name" value="ELONGATION FACTOR TS"/>
    <property type="match status" value="1"/>
</dbReference>
<dbReference type="PANTHER" id="PTHR11741:SF0">
    <property type="entry name" value="ELONGATION FACTOR TS, MITOCHONDRIAL"/>
    <property type="match status" value="1"/>
</dbReference>
<dbReference type="Pfam" id="PF00889">
    <property type="entry name" value="EF_TS"/>
    <property type="match status" value="1"/>
</dbReference>
<dbReference type="SUPFAM" id="SSF54713">
    <property type="entry name" value="Elongation factor Ts (EF-Ts), dimerisation domain"/>
    <property type="match status" value="2"/>
</dbReference>
<dbReference type="SUPFAM" id="SSF46934">
    <property type="entry name" value="UBA-like"/>
    <property type="match status" value="1"/>
</dbReference>
<dbReference type="PROSITE" id="PS01126">
    <property type="entry name" value="EF_TS_1"/>
    <property type="match status" value="1"/>
</dbReference>
<dbReference type="PROSITE" id="PS01127">
    <property type="entry name" value="EF_TS_2"/>
    <property type="match status" value="1"/>
</dbReference>
<feature type="chain" id="PRO_1000202254" description="Elongation factor Ts">
    <location>
        <begin position="1"/>
        <end position="293"/>
    </location>
</feature>
<feature type="region of interest" description="Involved in Mg(2+) ion dislocation from EF-Tu" evidence="1">
    <location>
        <begin position="81"/>
        <end position="84"/>
    </location>
</feature>
<reference key="1">
    <citation type="journal article" date="2009" name="PLoS ONE">
        <title>The complete genome of Teredinibacter turnerae T7901: an intracellular endosymbiont of marine wood-boring bivalves (shipworms).</title>
        <authorList>
            <person name="Yang J.C."/>
            <person name="Madupu R."/>
            <person name="Durkin A.S."/>
            <person name="Ekborg N.A."/>
            <person name="Pedamallu C.S."/>
            <person name="Hostetler J.B."/>
            <person name="Radune D."/>
            <person name="Toms B.S."/>
            <person name="Henrissat B."/>
            <person name="Coutinho P.M."/>
            <person name="Schwarz S."/>
            <person name="Field L."/>
            <person name="Trindade-Silva A.E."/>
            <person name="Soares C.A.G."/>
            <person name="Elshahawi S."/>
            <person name="Hanora A."/>
            <person name="Schmidt E.W."/>
            <person name="Haygood M.G."/>
            <person name="Posfai J."/>
            <person name="Benner J."/>
            <person name="Madinger C."/>
            <person name="Nove J."/>
            <person name="Anton B."/>
            <person name="Chaudhary K."/>
            <person name="Foster J."/>
            <person name="Holman A."/>
            <person name="Kumar S."/>
            <person name="Lessard P.A."/>
            <person name="Luyten Y.A."/>
            <person name="Slatko B."/>
            <person name="Wood N."/>
            <person name="Wu B."/>
            <person name="Teplitski M."/>
            <person name="Mougous J.D."/>
            <person name="Ward N."/>
            <person name="Eisen J.A."/>
            <person name="Badger J.H."/>
            <person name="Distel D.L."/>
        </authorList>
    </citation>
    <scope>NUCLEOTIDE SEQUENCE [LARGE SCALE GENOMIC DNA]</scope>
    <source>
        <strain>ATCC 39867 / T7901</strain>
    </source>
</reference>
<keyword id="KW-0963">Cytoplasm</keyword>
<keyword id="KW-0251">Elongation factor</keyword>
<keyword id="KW-0648">Protein biosynthesis</keyword>
<keyword id="KW-1185">Reference proteome</keyword>